<name>RL32_BAUCH</name>
<proteinExistence type="inferred from homology"/>
<feature type="chain" id="PRO_0000296427" description="Large ribosomal subunit protein bL32">
    <location>
        <begin position="1"/>
        <end position="56"/>
    </location>
</feature>
<feature type="region of interest" description="Disordered" evidence="2">
    <location>
        <begin position="1"/>
        <end position="34"/>
    </location>
</feature>
<protein>
    <recommendedName>
        <fullName evidence="1">Large ribosomal subunit protein bL32</fullName>
    </recommendedName>
    <alternativeName>
        <fullName evidence="3">50S ribosomal protein L32</fullName>
    </alternativeName>
</protein>
<gene>
    <name evidence="1" type="primary">rpmF</name>
    <name type="ordered locus">BCI_0438</name>
</gene>
<dbReference type="EMBL" id="CP000238">
    <property type="protein sequence ID" value="ABF14138.1"/>
    <property type="molecule type" value="Genomic_DNA"/>
</dbReference>
<dbReference type="RefSeq" id="WP_011520612.1">
    <property type="nucleotide sequence ID" value="NC_007984.1"/>
</dbReference>
<dbReference type="SMR" id="Q1LT35"/>
<dbReference type="STRING" id="374463.BCI_0438"/>
<dbReference type="KEGG" id="bci:BCI_0438"/>
<dbReference type="HOGENOM" id="CLU_129084_2_1_6"/>
<dbReference type="OrthoDB" id="9801927at2"/>
<dbReference type="Proteomes" id="UP000002427">
    <property type="component" value="Chromosome"/>
</dbReference>
<dbReference type="GO" id="GO:0015934">
    <property type="term" value="C:large ribosomal subunit"/>
    <property type="evidence" value="ECO:0007669"/>
    <property type="project" value="InterPro"/>
</dbReference>
<dbReference type="GO" id="GO:0003735">
    <property type="term" value="F:structural constituent of ribosome"/>
    <property type="evidence" value="ECO:0007669"/>
    <property type="project" value="InterPro"/>
</dbReference>
<dbReference type="GO" id="GO:0006412">
    <property type="term" value="P:translation"/>
    <property type="evidence" value="ECO:0007669"/>
    <property type="project" value="UniProtKB-UniRule"/>
</dbReference>
<dbReference type="HAMAP" id="MF_00340">
    <property type="entry name" value="Ribosomal_bL32"/>
    <property type="match status" value="1"/>
</dbReference>
<dbReference type="InterPro" id="IPR002677">
    <property type="entry name" value="Ribosomal_bL32"/>
</dbReference>
<dbReference type="InterPro" id="IPR044957">
    <property type="entry name" value="Ribosomal_bL32_bact"/>
</dbReference>
<dbReference type="InterPro" id="IPR011332">
    <property type="entry name" value="Ribosomal_zn-bd"/>
</dbReference>
<dbReference type="NCBIfam" id="TIGR01031">
    <property type="entry name" value="rpmF_bact"/>
    <property type="match status" value="1"/>
</dbReference>
<dbReference type="PANTHER" id="PTHR35534">
    <property type="entry name" value="50S RIBOSOMAL PROTEIN L32"/>
    <property type="match status" value="1"/>
</dbReference>
<dbReference type="PANTHER" id="PTHR35534:SF1">
    <property type="entry name" value="LARGE RIBOSOMAL SUBUNIT PROTEIN BL32"/>
    <property type="match status" value="1"/>
</dbReference>
<dbReference type="Pfam" id="PF01783">
    <property type="entry name" value="Ribosomal_L32p"/>
    <property type="match status" value="1"/>
</dbReference>
<dbReference type="SUPFAM" id="SSF57829">
    <property type="entry name" value="Zn-binding ribosomal proteins"/>
    <property type="match status" value="1"/>
</dbReference>
<reference key="1">
    <citation type="journal article" date="2006" name="PLoS Biol.">
        <title>Metabolic complementarity and genomics of the dual bacterial symbiosis of sharpshooters.</title>
        <authorList>
            <person name="Wu D."/>
            <person name="Daugherty S.C."/>
            <person name="Van Aken S.E."/>
            <person name="Pai G.H."/>
            <person name="Watkins K.L."/>
            <person name="Khouri H."/>
            <person name="Tallon L.J."/>
            <person name="Zaborsky J.M."/>
            <person name="Dunbar H.E."/>
            <person name="Tran P.L."/>
            <person name="Moran N.A."/>
            <person name="Eisen J.A."/>
        </authorList>
    </citation>
    <scope>NUCLEOTIDE SEQUENCE [LARGE SCALE GENOMIC DNA]</scope>
</reference>
<keyword id="KW-1185">Reference proteome</keyword>
<keyword id="KW-0687">Ribonucleoprotein</keyword>
<keyword id="KW-0689">Ribosomal protein</keyword>
<sequence length="56" mass="6438">MAVQQNKPSRSKRGMRRAHDALKTSTISVDKTSGKTHLRHHITTDGFYRGYKILKK</sequence>
<organism>
    <name type="scientific">Baumannia cicadellinicola subsp. Homalodisca coagulata</name>
    <dbReference type="NCBI Taxonomy" id="374463"/>
    <lineage>
        <taxon>Bacteria</taxon>
        <taxon>Pseudomonadati</taxon>
        <taxon>Pseudomonadota</taxon>
        <taxon>Gammaproteobacteria</taxon>
        <taxon>Candidatus Palibaumannia</taxon>
    </lineage>
</organism>
<evidence type="ECO:0000255" key="1">
    <source>
        <dbReference type="HAMAP-Rule" id="MF_00340"/>
    </source>
</evidence>
<evidence type="ECO:0000256" key="2">
    <source>
        <dbReference type="SAM" id="MobiDB-lite"/>
    </source>
</evidence>
<evidence type="ECO:0000305" key="3"/>
<comment type="similarity">
    <text evidence="1">Belongs to the bacterial ribosomal protein bL32 family.</text>
</comment>
<accession>Q1LT35</accession>